<comment type="function">
    <text evidence="4 5 6 11 12 13">Member of possibly 2 two-component regulatory system(s) Hik2/Rre1 and Hik2/RppA. Transduces PQ (plastoquinone) redox signals to photosystem gene expression machinery during the adjustment of photosystem stoichiometry. Reduced PQ suppresses its autophosphorylation activity (i.e. kinase activity is higher under oxidizing conditions) (Probable). Member of two-component regulatory system Hik2/Rre1, controls expression of sigB (sll0306), sll0528, slr1119, slr0852 and ssr3188 in response to hyperosmotic stress (Probable). Activity responds to high salt (with a linear response as concentrations rise to 0.5 M NaCl); detects Cl(-) levels (PubMed:24283389). Autophosphorylates and transfers phosphate to Rre1 (PubMed:25714549, PubMed:26904089). May transfer phosphate to RppA in a possible Hik2/RppA two-component system (Probable).</text>
</comment>
<comment type="catalytic activity">
    <reaction evidence="5 6">
        <text>ATP + protein L-histidine = ADP + protein N-phospho-L-histidine.</text>
        <dbReference type="EC" id="2.7.13.3"/>
    </reaction>
</comment>
<comment type="cofactor">
    <cofactor evidence="8">
        <name>[3Fe-4S] cluster</name>
        <dbReference type="ChEBI" id="CHEBI:21137"/>
    </cofactor>
    <text evidence="8">The 3Fe-4S cluster is redox-responsive, binds 1 cluster per monomer. It is coordinated by Cys-19 and other non-Cys residues.</text>
</comment>
<comment type="activity regulation">
    <text evidence="6 8">Autophosphorylation is inhibited by Na(+) but not by Cl(-) (PubMed:26904089). Reducing agents dithionite, duroquinol and decyl-plastoquinone, but not NADPH or ferredoxin inhibit autophosphorylation. Oxidation of the Fe-S cluster (with potassium ferricyanide) induces a conformational change that is conducive to its autophosphorylation activity (PubMed:31925322).</text>
</comment>
<comment type="biophysicochemical properties">
    <redoxPotential>
        <text evidence="8">E(0) is -15 mV.</text>
    </redoxPotential>
</comment>
<comment type="subunit">
    <text evidence="6 7">Exists as monomers, tetramers, hexamers and other higher-order oligomers; all are able to autophosphorylate. Upon treatment with 0.5 M NaCl only tetramers are seen, which are probably inactive (PubMed:29290041). Interacts with both RppA and Rre1 (PubMed:26904089).</text>
</comment>
<comment type="subcellular location">
    <subcellularLocation>
        <location evidence="11">Cytoplasm</location>
    </subcellularLocation>
</comment>
<comment type="domain">
    <text evidence="4">The N-terminal GAF domain activated by Cl(-).</text>
</comment>
<comment type="PTM">
    <text evidence="5 6 7 8">Autophosphorylates, probably on His-185.</text>
</comment>
<comment type="disruption phenotype">
    <text evidence="3">Essential, it cannot be deleted.</text>
</comment>
<comment type="similarity">
    <text evidence="13">Belongs to the chloroplast sensor kinase protein family.</text>
</comment>
<evidence type="ECO:0000255" key="1"/>
<evidence type="ECO:0000255" key="2">
    <source>
        <dbReference type="PROSITE-ProRule" id="PRU00107"/>
    </source>
</evidence>
<evidence type="ECO:0000269" key="3">
    <source>
    </source>
</evidence>
<evidence type="ECO:0000269" key="4">
    <source>
    </source>
</evidence>
<evidence type="ECO:0000269" key="5">
    <source>
    </source>
</evidence>
<evidence type="ECO:0000269" key="6">
    <source>
    </source>
</evidence>
<evidence type="ECO:0000269" key="7">
    <source>
    </source>
</evidence>
<evidence type="ECO:0000269" key="8">
    <source>
    </source>
</evidence>
<evidence type="ECO:0000303" key="9">
    <source>
    </source>
</evidence>
<evidence type="ECO:0000303" key="10">
    <source>
    </source>
</evidence>
<evidence type="ECO:0000305" key="11">
    <source>
    </source>
</evidence>
<evidence type="ECO:0000305" key="12">
    <source>
    </source>
</evidence>
<evidence type="ECO:0000305" key="13">
    <source>
    </source>
</evidence>
<evidence type="ECO:0000312" key="14">
    <source>
        <dbReference type="EMBL" id="BAA17304.1"/>
    </source>
</evidence>
<reference key="1">
    <citation type="journal article" date="1996" name="DNA Res.">
        <title>Sequence analysis of the genome of the unicellular cyanobacterium Synechocystis sp. strain PCC6803. II. Sequence determination of the entire genome and assignment of potential protein-coding regions.</title>
        <authorList>
            <person name="Kaneko T."/>
            <person name="Sato S."/>
            <person name="Kotani H."/>
            <person name="Tanaka A."/>
            <person name="Asamizu E."/>
            <person name="Nakamura Y."/>
            <person name="Miyajima N."/>
            <person name="Hirosawa M."/>
            <person name="Sugiura M."/>
            <person name="Sasamoto S."/>
            <person name="Kimura T."/>
            <person name="Hosouchi T."/>
            <person name="Matsuno A."/>
            <person name="Muraki A."/>
            <person name="Nakazaki N."/>
            <person name="Naruo K."/>
            <person name="Okumura S."/>
            <person name="Shimpo S."/>
            <person name="Takeuchi C."/>
            <person name="Wada T."/>
            <person name="Watanabe A."/>
            <person name="Yamada M."/>
            <person name="Yasuda M."/>
            <person name="Tabata S."/>
        </authorList>
    </citation>
    <scope>NUCLEOTIDE SEQUENCE [LARGE SCALE GENOMIC DNA]</scope>
    <source>
        <strain>ATCC 27184 / PCC 6803 / Kazusa</strain>
    </source>
</reference>
<reference key="2">
    <citation type="journal article" date="2004" name="J. Biol. Chem.">
        <title>Five histidine kinases perceive osmotic stress and regulate distinct sets of genes in Synechocystis.</title>
        <authorList>
            <person name="Paithoonrangsarid K."/>
            <person name="Shoumskaya M.A."/>
            <person name="Kanesaki Y."/>
            <person name="Satoh S."/>
            <person name="Tabata S."/>
            <person name="Los D.A."/>
            <person name="Zinchenko V.V."/>
            <person name="Hayashi H."/>
            <person name="Tanticharoen M."/>
            <person name="Suzuki I."/>
            <person name="Murata N."/>
        </authorList>
    </citation>
    <scope>FUNCTION IN HYPEROSMOTIC STRESS RESPONSE</scope>
    <scope>REGULON</scope>
    <scope>PROBABLE SUBCELLULAR LOCATION</scope>
    <scope>DISRUPTION PHENOTYPE</scope>
    <source>
        <strain>ATCC 27184 / PCC 6803 / Kazusa</strain>
    </source>
</reference>
<reference key="3">
    <citation type="journal article" date="2014" name="FEMS Microbiol. Lett.">
        <title>Functional analysis of the N-terminal region of an essential histidine kinase, Hik2, in the cyanobacterium Synechocystis sp. PCC 6803.</title>
        <authorList>
            <person name="Kotajima T."/>
            <person name="Shiraiwa Y."/>
            <person name="Suzuki I."/>
        </authorList>
    </citation>
    <scope>FUNCTION</scope>
    <scope>DOMAIN</scope>
    <scope>MUTAGENESIS OF GLN-22; PRO-114; GLY-123; ARG-129; TRP-134; GLN-141 AND ASP-156</scope>
    <source>
        <strain>ATCC 27184 / PCC 6803 / Kazusa</strain>
    </source>
</reference>
<reference key="4">
    <citation type="journal article" date="2015" name="FEMS Microbiol. Lett.">
        <title>Identification of the correct form of the mis-annotated response regulator Rre1 from the cyanobacterium Synechocystis sp. PCC 6803.</title>
        <authorList>
            <person name="Vidal R."/>
        </authorList>
    </citation>
    <scope>FUNCTION</scope>
    <scope>CATALYTIC ACTIVITY</scope>
    <scope>AUTOPHOSPHORYLATION</scope>
    <source>
        <strain>ATCC 27184 / PCC 6803 / Kazusa</strain>
    </source>
</reference>
<reference key="5">
    <citation type="journal article" date="2016" name="Front. Plant Sci.">
        <title>A Two-Component Regulatory System in Transcriptional Control of Photosystem Stoichiometry: Redox-Dependent and Sodium Ion-Dependent Phosphoryl Transfer from Cyanobacterial Histidine Kinase Hik2 to Response Regulators Rre1 and RppA.</title>
        <authorList>
            <person name="Ibrahim I.M."/>
            <person name="Puthiyaveetil S."/>
            <person name="Allen J.F."/>
        </authorList>
    </citation>
    <scope>FUNCTION</scope>
    <scope>CATALYTIC ACTIVITY</scope>
    <scope>ACTIVITY REGULATION</scope>
    <scope>INTERACTION WITH RPPA AND RRE1</scope>
    <scope>AUTOPHOSPHORYLATION</scope>
    <scope>DOMAIN</scope>
    <scope>PHOSPHORYLATION AT HIS-185</scope>
    <scope>MUTAGENESIS OF HIS-185; GLY-359; GLY-361; GLY-386; GLY-388 AND GLY-390</scope>
    <source>
        <strain>ATCC 27184 / PCC 6803 / Kazusa</strain>
    </source>
</reference>
<reference key="6">
    <citation type="journal article" date="2018" name="Protoplasma">
        <title>Oligomeric states in sodium ion-dependent regulation of cyanobacterial histidine kinase-2.</title>
        <authorList>
            <person name="Ibrahim I.M."/>
            <person name="Wang L."/>
            <person name="Puthiyaveetil S."/>
            <person name="Krauss N."/>
            <person name="Nield J."/>
            <person name="Allen J.F."/>
        </authorList>
    </citation>
    <scope>SUBUNIT</scope>
    <scope>AUTOPHOSPHORYLATION</scope>
    <source>
        <strain>ATCC 27184 / PCC 6803 / Kazusa</strain>
    </source>
</reference>
<reference key="7">
    <citation type="journal article" date="2020" name="Commun. Biol.">
        <title>An evolutionarily conserved iron-sulfur cluster underlies redox sensory function of the Chloroplast Sensor Kinase.</title>
        <authorList>
            <person name="Ibrahim I.M."/>
            <person name="Wu H."/>
            <person name="Ezhov R."/>
            <person name="Kayanja G.E."/>
            <person name="Zakharov S.D."/>
            <person name="Du Y."/>
            <person name="Tao W.A."/>
            <person name="Pushkar Y."/>
            <person name="Cramer W.A."/>
            <person name="Puthiyaveetil S."/>
        </authorList>
    </citation>
    <scope>FUNCTION</scope>
    <scope>COFACTOR</scope>
    <scope>BIOPHYSICOCHEMICAL PROPERTIES</scope>
    <scope>MUTAGENESIS OF CYS-19; CYS-35 AND CYS-153</scope>
    <source>
        <strain>ATCC 27184 / PCC 6803 / Kazusa</strain>
    </source>
</reference>
<organism>
    <name type="scientific">Synechocystis sp. (strain ATCC 27184 / PCC 6803 / Kazusa)</name>
    <dbReference type="NCBI Taxonomy" id="1111708"/>
    <lineage>
        <taxon>Bacteria</taxon>
        <taxon>Bacillati</taxon>
        <taxon>Cyanobacteriota</taxon>
        <taxon>Cyanophyceae</taxon>
        <taxon>Synechococcales</taxon>
        <taxon>Merismopediaceae</taxon>
        <taxon>Synechocystis</taxon>
    </lineage>
</organism>
<gene>
    <name evidence="9" type="primary">hik2</name>
    <name evidence="14" type="ordered locus">slr1147</name>
</gene>
<feature type="chain" id="PRO_0000453140" description="Sensor histidine kinase Hik2">
    <location>
        <begin position="1"/>
        <end position="434"/>
    </location>
</feature>
<feature type="domain" description="GAF" evidence="1">
    <location>
        <begin position="16"/>
        <end position="152"/>
    </location>
</feature>
<feature type="domain" description="Histidine kinase" evidence="2">
    <location>
        <begin position="182"/>
        <end position="432"/>
    </location>
</feature>
<feature type="short sequence motif" description="G1 box" evidence="12">
    <location>
        <begin position="357"/>
        <end position="361"/>
    </location>
</feature>
<feature type="short sequence motif" description="G2 box" evidence="12">
    <location>
        <begin position="386"/>
        <end position="390"/>
    </location>
</feature>
<feature type="binding site" evidence="13">
    <location>
        <position position="19"/>
    </location>
    <ligand>
        <name>[3Fe-4S] cluster</name>
        <dbReference type="ChEBI" id="CHEBI:21137"/>
    </ligand>
</feature>
<feature type="modified residue" description="Phosphohistidine; by autocatalysis" evidence="2 12">
    <location>
        <position position="185"/>
    </location>
</feature>
<feature type="mutagenesis site" description="Binds less Fe(2+) and S(2-)." evidence="8">
    <original>C</original>
    <variation>S</variation>
    <location>
        <position position="19"/>
    </location>
</feature>
<feature type="mutagenesis site" description="Loss of Cl(-) response." evidence="4">
    <original>Q</original>
    <variation>E</variation>
    <location>
        <position position="22"/>
    </location>
</feature>
<feature type="mutagenesis site" description="Binds less Fe(2+)." evidence="8">
    <original>C</original>
    <variation>S</variation>
    <location>
        <position position="35"/>
    </location>
</feature>
<feature type="mutagenesis site" description="Loss of Cl(-) response." evidence="4">
    <original>P</original>
    <variation>A</variation>
    <location>
        <position position="114"/>
    </location>
</feature>
<feature type="mutagenesis site" description="Loss of Cl(-) response." evidence="4">
    <original>G</original>
    <variation>A</variation>
    <location>
        <position position="123"/>
    </location>
</feature>
<feature type="mutagenesis site" description="Loss of Cl(-) response." evidence="4">
    <original>R</original>
    <variation>K</variation>
    <location>
        <position position="129"/>
    </location>
</feature>
<feature type="mutagenesis site" description="Loss of Cl(-) response." evidence="4">
    <original>W</original>
    <variation>F</variation>
    <location>
        <position position="134"/>
    </location>
</feature>
<feature type="mutagenesis site" description="Loss of Cl(-) response." evidence="4">
    <original>Q</original>
    <variation>A</variation>
    <location>
        <position position="141"/>
    </location>
</feature>
<feature type="mutagenesis site" description="Binds less S(2-)." evidence="8">
    <original>C</original>
    <variation>S</variation>
    <location>
        <position position="153"/>
    </location>
</feature>
<feature type="mutagenesis site" description="Loss of Cl(-) response." evidence="4">
    <original>D</original>
    <variation>A</variation>
    <location>
        <position position="156"/>
    </location>
</feature>
<feature type="mutagenesis site" description="Loss of autophosphorylation." evidence="6">
    <original>H</original>
    <variation>Q</variation>
    <location>
        <position position="185"/>
    </location>
</feature>
<feature type="mutagenesis site" description="Loss of autophosphorylation." evidence="6">
    <original>G</original>
    <variation>A</variation>
    <location>
        <position position="359"/>
    </location>
</feature>
<feature type="mutagenesis site" description="Loss of autophosphorylation." evidence="6">
    <original>G</original>
    <variation>A</variation>
    <location>
        <position position="361"/>
    </location>
</feature>
<feature type="mutagenesis site" description="Loss of autophosphorylation." evidence="6">
    <original>G</original>
    <variation>A</variation>
    <location>
        <position position="386"/>
    </location>
</feature>
<feature type="mutagenesis site" description="Loss of autophosphorylation." evidence="6">
    <original>G</original>
    <variation>A</variation>
    <location>
        <position position="388"/>
    </location>
</feature>
<feature type="mutagenesis site" description="Loss of autophosphorylation." evidence="6">
    <original>G</original>
    <variation>A</variation>
    <location>
        <position position="390"/>
    </location>
</feature>
<keyword id="KW-0003">3Fe-4S</keyword>
<keyword id="KW-0963">Cytoplasm</keyword>
<keyword id="KW-0408">Iron</keyword>
<keyword id="KW-0411">Iron-sulfur</keyword>
<keyword id="KW-0418">Kinase</keyword>
<keyword id="KW-0479">Metal-binding</keyword>
<keyword id="KW-0597">Phosphoprotein</keyword>
<keyword id="KW-1185">Reference proteome</keyword>
<keyword id="KW-0808">Transferase</keyword>
<keyword id="KW-0902">Two-component regulatory system</keyword>
<dbReference type="EC" id="2.7.13.3" evidence="5 6"/>
<dbReference type="EMBL" id="BA000022">
    <property type="protein sequence ID" value="BAA17304.1"/>
    <property type="molecule type" value="Genomic_DNA"/>
</dbReference>
<dbReference type="PIR" id="S77457">
    <property type="entry name" value="S77457"/>
</dbReference>
<dbReference type="SMR" id="P73276"/>
<dbReference type="IntAct" id="P73276">
    <property type="interactions" value="5"/>
</dbReference>
<dbReference type="STRING" id="1148.gene:10498167"/>
<dbReference type="iPTMnet" id="P73276"/>
<dbReference type="PaxDb" id="1148-1652382"/>
<dbReference type="EnsemblBacteria" id="BAA17304">
    <property type="protein sequence ID" value="BAA17304"/>
    <property type="gene ID" value="BAA17304"/>
</dbReference>
<dbReference type="KEGG" id="syn:slr1147"/>
<dbReference type="eggNOG" id="COG0642">
    <property type="taxonomic scope" value="Bacteria"/>
</dbReference>
<dbReference type="eggNOG" id="COG2203">
    <property type="taxonomic scope" value="Bacteria"/>
</dbReference>
<dbReference type="InParanoid" id="P73276"/>
<dbReference type="PhylomeDB" id="P73276"/>
<dbReference type="BRENDA" id="2.7.13.3">
    <property type="organism ID" value="382"/>
</dbReference>
<dbReference type="Proteomes" id="UP000001425">
    <property type="component" value="Chromosome"/>
</dbReference>
<dbReference type="GO" id="GO:0005737">
    <property type="term" value="C:cytoplasm"/>
    <property type="evidence" value="ECO:0007669"/>
    <property type="project" value="UniProtKB-SubCell"/>
</dbReference>
<dbReference type="GO" id="GO:0051538">
    <property type="term" value="F:3 iron, 4 sulfur cluster binding"/>
    <property type="evidence" value="ECO:0007669"/>
    <property type="project" value="UniProtKB-KW"/>
</dbReference>
<dbReference type="GO" id="GO:0046872">
    <property type="term" value="F:metal ion binding"/>
    <property type="evidence" value="ECO:0007669"/>
    <property type="project" value="UniProtKB-KW"/>
</dbReference>
<dbReference type="GO" id="GO:0000155">
    <property type="term" value="F:phosphorelay sensor kinase activity"/>
    <property type="evidence" value="ECO:0007669"/>
    <property type="project" value="InterPro"/>
</dbReference>
<dbReference type="CDD" id="cd00075">
    <property type="entry name" value="HATPase"/>
    <property type="match status" value="1"/>
</dbReference>
<dbReference type="CDD" id="cd00082">
    <property type="entry name" value="HisKA"/>
    <property type="match status" value="1"/>
</dbReference>
<dbReference type="FunFam" id="3.30.565.10:FF:000049">
    <property type="entry name" value="Two-component sensor histidine kinase"/>
    <property type="match status" value="1"/>
</dbReference>
<dbReference type="Gene3D" id="1.10.287.130">
    <property type="match status" value="1"/>
</dbReference>
<dbReference type="Gene3D" id="3.30.450.40">
    <property type="match status" value="1"/>
</dbReference>
<dbReference type="Gene3D" id="3.30.565.10">
    <property type="entry name" value="Histidine kinase-like ATPase, C-terminal domain"/>
    <property type="match status" value="1"/>
</dbReference>
<dbReference type="InterPro" id="IPR003018">
    <property type="entry name" value="GAF"/>
</dbReference>
<dbReference type="InterPro" id="IPR029016">
    <property type="entry name" value="GAF-like_dom_sf"/>
</dbReference>
<dbReference type="InterPro" id="IPR036890">
    <property type="entry name" value="HATPase_C_sf"/>
</dbReference>
<dbReference type="InterPro" id="IPR005467">
    <property type="entry name" value="His_kinase_dom"/>
</dbReference>
<dbReference type="InterPro" id="IPR003661">
    <property type="entry name" value="HisK_dim/P_dom"/>
</dbReference>
<dbReference type="InterPro" id="IPR036097">
    <property type="entry name" value="HisK_dim/P_sf"/>
</dbReference>
<dbReference type="InterPro" id="IPR050736">
    <property type="entry name" value="Sensor_HK_Regulatory"/>
</dbReference>
<dbReference type="InterPro" id="IPR004358">
    <property type="entry name" value="Sig_transdc_His_kin-like_C"/>
</dbReference>
<dbReference type="PANTHER" id="PTHR43711:SF26">
    <property type="entry name" value="SENSOR HISTIDINE KINASE RCSC"/>
    <property type="match status" value="1"/>
</dbReference>
<dbReference type="PANTHER" id="PTHR43711">
    <property type="entry name" value="TWO-COMPONENT HISTIDINE KINASE"/>
    <property type="match status" value="1"/>
</dbReference>
<dbReference type="Pfam" id="PF01590">
    <property type="entry name" value="GAF"/>
    <property type="match status" value="1"/>
</dbReference>
<dbReference type="Pfam" id="PF02518">
    <property type="entry name" value="HATPase_c"/>
    <property type="match status" value="1"/>
</dbReference>
<dbReference type="Pfam" id="PF00512">
    <property type="entry name" value="HisKA"/>
    <property type="match status" value="1"/>
</dbReference>
<dbReference type="PRINTS" id="PR00344">
    <property type="entry name" value="BCTRLSENSOR"/>
</dbReference>
<dbReference type="SMART" id="SM00065">
    <property type="entry name" value="GAF"/>
    <property type="match status" value="1"/>
</dbReference>
<dbReference type="SMART" id="SM00387">
    <property type="entry name" value="HATPase_c"/>
    <property type="match status" value="1"/>
</dbReference>
<dbReference type="SMART" id="SM00388">
    <property type="entry name" value="HisKA"/>
    <property type="match status" value="1"/>
</dbReference>
<dbReference type="SUPFAM" id="SSF55874">
    <property type="entry name" value="ATPase domain of HSP90 chaperone/DNA topoisomerase II/histidine kinase"/>
    <property type="match status" value="1"/>
</dbReference>
<dbReference type="SUPFAM" id="SSF55781">
    <property type="entry name" value="GAF domain-like"/>
    <property type="match status" value="1"/>
</dbReference>
<dbReference type="SUPFAM" id="SSF47384">
    <property type="entry name" value="Homodimeric domain of signal transducing histidine kinase"/>
    <property type="match status" value="1"/>
</dbReference>
<dbReference type="PROSITE" id="PS50109">
    <property type="entry name" value="HIS_KIN"/>
    <property type="match status" value="1"/>
</dbReference>
<sequence>MAGSISSMYSPSAGLISLCQSQVRLLQQGLRVDWCGVYLNQEETEQGLVPLVVSHGSTLVESESYGLISLPQGEVSPPMDDFSLPAVPVGVGQLSRRSRLEPPPFDADKRLVLPLVYGEEMVGLLVIHRSQGQWHGEEMMQLEAIAKSLAVACLLDQQQDWYRQAWEEQNQQYQWERQHWADLLHQLRNPLTALKTFSKLLLKRWHGDNKSQQVVEGIVRQGEHLQELLQSFEASQSQGPEAVPLLSSSPVTTIQVLPPADRVETMPLANFSLGEVLPPILLAHQAIAAERNITLTAQIALIDTVVMANRLALREVVNNLLDNGIKYTPNGGLVEVSLALEKVSSSGMDWATLAIADTGYGIPPEDQQKIFERNYRGVQGRGSINGTGLGLAIVADLVAQMGGKITVTSPNGLSRDPDQPGSTFTLWLRSGEQV</sequence>
<protein>
    <recommendedName>
        <fullName evidence="9">Sensor histidine kinase Hik2</fullName>
        <ecNumber evidence="5 6">2.7.13.3</ecNumber>
    </recommendedName>
    <alternativeName>
        <fullName evidence="10">CSK</fullName>
    </alternativeName>
</protein>
<accession>P73276</accession>
<name>HIK2_SYNY3</name>
<proteinExistence type="evidence at protein level"/>